<organism>
    <name type="scientific">Akkermansia muciniphila (strain ATCC BAA-835 / DSM 22959 / JCM 33894 / BCRC 81048 / CCUG 64013 / CIP 107961 / Muc)</name>
    <dbReference type="NCBI Taxonomy" id="349741"/>
    <lineage>
        <taxon>Bacteria</taxon>
        <taxon>Pseudomonadati</taxon>
        <taxon>Verrucomicrobiota</taxon>
        <taxon>Verrucomicrobiia</taxon>
        <taxon>Verrucomicrobiales</taxon>
        <taxon>Akkermansiaceae</taxon>
        <taxon>Akkermansia</taxon>
    </lineage>
</organism>
<comment type="function">
    <text evidence="1">Involved in protein export. Acts as a chaperone by maintaining the newly synthesized protein in an open conformation. Functions as a peptidyl-prolyl cis-trans isomerase.</text>
</comment>
<comment type="catalytic activity">
    <reaction evidence="1">
        <text>[protein]-peptidylproline (omega=180) = [protein]-peptidylproline (omega=0)</text>
        <dbReference type="Rhea" id="RHEA:16237"/>
        <dbReference type="Rhea" id="RHEA-COMP:10747"/>
        <dbReference type="Rhea" id="RHEA-COMP:10748"/>
        <dbReference type="ChEBI" id="CHEBI:83833"/>
        <dbReference type="ChEBI" id="CHEBI:83834"/>
        <dbReference type="EC" id="5.2.1.8"/>
    </reaction>
</comment>
<comment type="subcellular location">
    <subcellularLocation>
        <location>Cytoplasm</location>
    </subcellularLocation>
    <text evidence="1">About half TF is bound to the ribosome near the polypeptide exit tunnel while the other half is free in the cytoplasm.</text>
</comment>
<comment type="domain">
    <text evidence="1">Consists of 3 domains; the N-terminus binds the ribosome, the middle domain has PPIase activity, while the C-terminus has intrinsic chaperone activity on its own.</text>
</comment>
<comment type="similarity">
    <text evidence="1">Belongs to the FKBP-type PPIase family. Tig subfamily.</text>
</comment>
<feature type="chain" id="PRO_1000115497" description="Trigger factor">
    <location>
        <begin position="1"/>
        <end position="436"/>
    </location>
</feature>
<feature type="domain" description="PPIase FKBP-type" evidence="1">
    <location>
        <begin position="161"/>
        <end position="255"/>
    </location>
</feature>
<keyword id="KW-0131">Cell cycle</keyword>
<keyword id="KW-0132">Cell division</keyword>
<keyword id="KW-0143">Chaperone</keyword>
<keyword id="KW-0963">Cytoplasm</keyword>
<keyword id="KW-0413">Isomerase</keyword>
<keyword id="KW-1185">Reference proteome</keyword>
<keyword id="KW-0697">Rotamase</keyword>
<name>TIG_AKKM8</name>
<gene>
    <name evidence="1" type="primary">tig</name>
    <name type="ordered locus">Amuc_1052</name>
</gene>
<protein>
    <recommendedName>
        <fullName evidence="1">Trigger factor</fullName>
        <shortName evidence="1">TF</shortName>
        <ecNumber evidence="1">5.2.1.8</ecNumber>
    </recommendedName>
    <alternativeName>
        <fullName evidence="1">PPIase</fullName>
    </alternativeName>
</protein>
<reference key="1">
    <citation type="journal article" date="2011" name="PLoS ONE">
        <title>The genome of Akkermansia muciniphila, a dedicated intestinal mucin degrader, and its use in exploring intestinal metagenomes.</title>
        <authorList>
            <person name="van Passel M.W."/>
            <person name="Kant R."/>
            <person name="Zoetendal E.G."/>
            <person name="Plugge C.M."/>
            <person name="Derrien M."/>
            <person name="Malfatti S.A."/>
            <person name="Chain P.S."/>
            <person name="Woyke T."/>
            <person name="Palva A."/>
            <person name="de Vos W.M."/>
            <person name="Smidt H."/>
        </authorList>
    </citation>
    <scope>NUCLEOTIDE SEQUENCE [LARGE SCALE GENOMIC DNA]</scope>
    <source>
        <strain>ATCC BAA-835 / DSM 22959 / JCM 33894 / BCRC 81048 / CCUG 64013 / CIP 107961 / Muc</strain>
    </source>
</reference>
<dbReference type="EC" id="5.2.1.8" evidence="1"/>
<dbReference type="EMBL" id="CP001071">
    <property type="protein sequence ID" value="ACD04878.1"/>
    <property type="molecule type" value="Genomic_DNA"/>
</dbReference>
<dbReference type="RefSeq" id="WP_012420093.1">
    <property type="nucleotide sequence ID" value="NC_010655.1"/>
</dbReference>
<dbReference type="SMR" id="B2UQZ3"/>
<dbReference type="STRING" id="349741.Amuc_1052"/>
<dbReference type="PaxDb" id="349741-Amuc_1052"/>
<dbReference type="KEGG" id="amu:Amuc_1052"/>
<dbReference type="eggNOG" id="COG0544">
    <property type="taxonomic scope" value="Bacteria"/>
</dbReference>
<dbReference type="HOGENOM" id="CLU_033058_3_2_0"/>
<dbReference type="OrthoDB" id="9767721at2"/>
<dbReference type="Proteomes" id="UP000001031">
    <property type="component" value="Chromosome"/>
</dbReference>
<dbReference type="GO" id="GO:0005737">
    <property type="term" value="C:cytoplasm"/>
    <property type="evidence" value="ECO:0007669"/>
    <property type="project" value="UniProtKB-SubCell"/>
</dbReference>
<dbReference type="GO" id="GO:0003755">
    <property type="term" value="F:peptidyl-prolyl cis-trans isomerase activity"/>
    <property type="evidence" value="ECO:0007669"/>
    <property type="project" value="UniProtKB-UniRule"/>
</dbReference>
<dbReference type="GO" id="GO:0044183">
    <property type="term" value="F:protein folding chaperone"/>
    <property type="evidence" value="ECO:0007669"/>
    <property type="project" value="TreeGrafter"/>
</dbReference>
<dbReference type="GO" id="GO:0043022">
    <property type="term" value="F:ribosome binding"/>
    <property type="evidence" value="ECO:0007669"/>
    <property type="project" value="TreeGrafter"/>
</dbReference>
<dbReference type="GO" id="GO:0051083">
    <property type="term" value="P:'de novo' cotranslational protein folding"/>
    <property type="evidence" value="ECO:0007669"/>
    <property type="project" value="TreeGrafter"/>
</dbReference>
<dbReference type="GO" id="GO:0051301">
    <property type="term" value="P:cell division"/>
    <property type="evidence" value="ECO:0007669"/>
    <property type="project" value="UniProtKB-KW"/>
</dbReference>
<dbReference type="GO" id="GO:0061077">
    <property type="term" value="P:chaperone-mediated protein folding"/>
    <property type="evidence" value="ECO:0007669"/>
    <property type="project" value="TreeGrafter"/>
</dbReference>
<dbReference type="GO" id="GO:0015031">
    <property type="term" value="P:protein transport"/>
    <property type="evidence" value="ECO:0007669"/>
    <property type="project" value="UniProtKB-UniRule"/>
</dbReference>
<dbReference type="GO" id="GO:0043335">
    <property type="term" value="P:protein unfolding"/>
    <property type="evidence" value="ECO:0007669"/>
    <property type="project" value="TreeGrafter"/>
</dbReference>
<dbReference type="Gene3D" id="3.10.50.40">
    <property type="match status" value="1"/>
</dbReference>
<dbReference type="Gene3D" id="3.30.70.1050">
    <property type="entry name" value="Trigger factor ribosome-binding domain"/>
    <property type="match status" value="1"/>
</dbReference>
<dbReference type="Gene3D" id="1.10.3120.10">
    <property type="entry name" value="Trigger factor, C-terminal domain"/>
    <property type="match status" value="1"/>
</dbReference>
<dbReference type="HAMAP" id="MF_00303">
    <property type="entry name" value="Trigger_factor_Tig"/>
    <property type="match status" value="1"/>
</dbReference>
<dbReference type="InterPro" id="IPR046357">
    <property type="entry name" value="PPIase_dom_sf"/>
</dbReference>
<dbReference type="InterPro" id="IPR001179">
    <property type="entry name" value="PPIase_FKBP_dom"/>
</dbReference>
<dbReference type="InterPro" id="IPR005215">
    <property type="entry name" value="Trig_fac"/>
</dbReference>
<dbReference type="InterPro" id="IPR008880">
    <property type="entry name" value="Trigger_fac_C"/>
</dbReference>
<dbReference type="InterPro" id="IPR037041">
    <property type="entry name" value="Trigger_fac_C_sf"/>
</dbReference>
<dbReference type="InterPro" id="IPR008881">
    <property type="entry name" value="Trigger_fac_ribosome-bd_bac"/>
</dbReference>
<dbReference type="InterPro" id="IPR036611">
    <property type="entry name" value="Trigger_fac_ribosome-bd_sf"/>
</dbReference>
<dbReference type="InterPro" id="IPR027304">
    <property type="entry name" value="Trigger_fact/SurA_dom_sf"/>
</dbReference>
<dbReference type="NCBIfam" id="TIGR00115">
    <property type="entry name" value="tig"/>
    <property type="match status" value="1"/>
</dbReference>
<dbReference type="PANTHER" id="PTHR30560">
    <property type="entry name" value="TRIGGER FACTOR CHAPERONE AND PEPTIDYL-PROLYL CIS/TRANS ISOMERASE"/>
    <property type="match status" value="1"/>
</dbReference>
<dbReference type="PANTHER" id="PTHR30560:SF3">
    <property type="entry name" value="TRIGGER FACTOR-LIKE PROTEIN TIG, CHLOROPLASTIC"/>
    <property type="match status" value="1"/>
</dbReference>
<dbReference type="Pfam" id="PF00254">
    <property type="entry name" value="FKBP_C"/>
    <property type="match status" value="1"/>
</dbReference>
<dbReference type="Pfam" id="PF05698">
    <property type="entry name" value="Trigger_C"/>
    <property type="match status" value="1"/>
</dbReference>
<dbReference type="Pfam" id="PF05697">
    <property type="entry name" value="Trigger_N"/>
    <property type="match status" value="1"/>
</dbReference>
<dbReference type="PIRSF" id="PIRSF003095">
    <property type="entry name" value="Trigger_factor"/>
    <property type="match status" value="1"/>
</dbReference>
<dbReference type="SUPFAM" id="SSF54534">
    <property type="entry name" value="FKBP-like"/>
    <property type="match status" value="1"/>
</dbReference>
<dbReference type="SUPFAM" id="SSF109998">
    <property type="entry name" value="Triger factor/SurA peptide-binding domain-like"/>
    <property type="match status" value="1"/>
</dbReference>
<dbReference type="SUPFAM" id="SSF102735">
    <property type="entry name" value="Trigger factor ribosome-binding domain"/>
    <property type="match status" value="1"/>
</dbReference>
<accession>B2UQZ3</accession>
<evidence type="ECO:0000255" key="1">
    <source>
        <dbReference type="HAMAP-Rule" id="MF_00303"/>
    </source>
</evidence>
<sequence>MEINVDIQPDCTATLKASIPAETTAARRASIVDSYAAKAKLPGFRPGKTPKSIIEKRFKKEMEEELLDTLFETACSTALEENPKLKVLSFGKPEQSLDDQGNYTATSTMTVVPEFELPEYKGIEVKVPSSEVTEADVEEALNSLAEQIAEFTPVDRAAQKDDVAIIDFKTTLDGKPVAEAVGKPVGFLEGRDGQWMKVEDDQFLPGFASALEGLNAGDSKDITVTIPDTFPITELRGKELVFHATVKEVREKQLPAMDDAFAEKVLPGKNLEELKTALKENLAQRKAMQIDEAKADQITEKLADMLDFNLPEAVVEREVYGILQQKMQQAMYSGNAPADMDKFVEEAREEAKQEAKRNLKVFFMLQEVAQVEKIAVTEMELYNEVARQARQQKKNLKSYIRELQREGRVHGIRMSLLTAKVLDFLTKEAKVTVDEQ</sequence>
<proteinExistence type="inferred from homology"/>